<accession>P63293</accession>
<accession>P01288</accession>
<accession>Q9MZD4</accession>
<proteinExistence type="evidence at protein level"/>
<keyword id="KW-0027">Amidation</keyword>
<keyword id="KW-0903">Direct protein sequencing</keyword>
<keyword id="KW-1185">Reference proteome</keyword>
<keyword id="KW-0964">Secreted</keyword>
<protein>
    <recommendedName>
        <fullName>Somatoliberin</fullName>
    </recommendedName>
    <alternativeName>
        <fullName>Growth hormone-releasing factor</fullName>
        <shortName>GRF</shortName>
    </alternativeName>
    <alternativeName>
        <fullName>Growth hormone-releasing hormone</fullName>
        <shortName>GHRH</shortName>
    </alternativeName>
</protein>
<name>SLIB_CAPHI</name>
<organism>
    <name type="scientific">Capra hircus</name>
    <name type="common">Goat</name>
    <dbReference type="NCBI Taxonomy" id="9925"/>
    <lineage>
        <taxon>Eukaryota</taxon>
        <taxon>Metazoa</taxon>
        <taxon>Chordata</taxon>
        <taxon>Craniata</taxon>
        <taxon>Vertebrata</taxon>
        <taxon>Euteleostomi</taxon>
        <taxon>Mammalia</taxon>
        <taxon>Eutheria</taxon>
        <taxon>Laurasiatheria</taxon>
        <taxon>Artiodactyla</taxon>
        <taxon>Ruminantia</taxon>
        <taxon>Pecora</taxon>
        <taxon>Bovidae</taxon>
        <taxon>Caprinae</taxon>
        <taxon>Capra</taxon>
    </lineage>
</organism>
<evidence type="ECO:0000269" key="1">
    <source>
    </source>
</evidence>
<evidence type="ECO:0000305" key="2"/>
<feature type="chain" id="PRO_0000148920" description="Somatoliberin">
    <location>
        <begin position="1"/>
        <end position="44"/>
    </location>
</feature>
<feature type="modified residue" description="Leucine amide" evidence="1">
    <location>
        <position position="44"/>
    </location>
</feature>
<dbReference type="SMR" id="P63293"/>
<dbReference type="STRING" id="9925.ENSCHIP00000007557"/>
<dbReference type="Proteomes" id="UP000291000">
    <property type="component" value="Unassembled WGS sequence"/>
</dbReference>
<dbReference type="Proteomes" id="UP000694566">
    <property type="component" value="Unplaced"/>
</dbReference>
<dbReference type="GO" id="GO:0005615">
    <property type="term" value="C:extracellular space"/>
    <property type="evidence" value="ECO:0007669"/>
    <property type="project" value="TreeGrafter"/>
</dbReference>
<dbReference type="GO" id="GO:0043204">
    <property type="term" value="C:perikaryon"/>
    <property type="evidence" value="ECO:0007669"/>
    <property type="project" value="TreeGrafter"/>
</dbReference>
<dbReference type="GO" id="GO:0043195">
    <property type="term" value="C:terminal bouton"/>
    <property type="evidence" value="ECO:0007669"/>
    <property type="project" value="TreeGrafter"/>
</dbReference>
<dbReference type="GO" id="GO:0016608">
    <property type="term" value="F:growth hormone-releasing hormone activity"/>
    <property type="evidence" value="ECO:0007669"/>
    <property type="project" value="TreeGrafter"/>
</dbReference>
<dbReference type="GO" id="GO:0031770">
    <property type="term" value="F:growth hormone-releasing hormone receptor binding"/>
    <property type="evidence" value="ECO:0007669"/>
    <property type="project" value="TreeGrafter"/>
</dbReference>
<dbReference type="GO" id="GO:0005184">
    <property type="term" value="F:neuropeptide hormone activity"/>
    <property type="evidence" value="ECO:0007669"/>
    <property type="project" value="InterPro"/>
</dbReference>
<dbReference type="GO" id="GO:0051428">
    <property type="term" value="F:peptide hormone receptor binding"/>
    <property type="evidence" value="ECO:0007669"/>
    <property type="project" value="TreeGrafter"/>
</dbReference>
<dbReference type="GO" id="GO:0007189">
    <property type="term" value="P:adenylate cyclase-activating G protein-coupled receptor signaling pathway"/>
    <property type="evidence" value="ECO:0007669"/>
    <property type="project" value="TreeGrafter"/>
</dbReference>
<dbReference type="GO" id="GO:0030252">
    <property type="term" value="P:growth hormone secretion"/>
    <property type="evidence" value="ECO:0007669"/>
    <property type="project" value="TreeGrafter"/>
</dbReference>
<dbReference type="GO" id="GO:0032880">
    <property type="term" value="P:regulation of protein localization"/>
    <property type="evidence" value="ECO:0007669"/>
    <property type="project" value="TreeGrafter"/>
</dbReference>
<dbReference type="InterPro" id="IPR000532">
    <property type="entry name" value="Glucagon_GIP_secretin_VIP"/>
</dbReference>
<dbReference type="InterPro" id="IPR046963">
    <property type="entry name" value="VIP/GHRH-like"/>
</dbReference>
<dbReference type="PANTHER" id="PTHR11213">
    <property type="entry name" value="GLUCAGON-FAMILY NEUROPEPTIDE"/>
    <property type="match status" value="1"/>
</dbReference>
<dbReference type="PANTHER" id="PTHR11213:SF6">
    <property type="entry name" value="SOMATOLIBERIN"/>
    <property type="match status" value="1"/>
</dbReference>
<dbReference type="Pfam" id="PF00123">
    <property type="entry name" value="Hormone_2"/>
    <property type="match status" value="1"/>
</dbReference>
<dbReference type="SMART" id="SM00070">
    <property type="entry name" value="GLUCA"/>
    <property type="match status" value="1"/>
</dbReference>
<dbReference type="PROSITE" id="PS00260">
    <property type="entry name" value="GLUCAGON"/>
    <property type="match status" value="1"/>
</dbReference>
<reference key="1">
    <citation type="journal article" date="1984" name="Biochem. Biophys. Res. Commun.">
        <title>Growth hormone-releasing factor from ovine and caprine hypothalamus: isolation, sequence analysis and total synthesis.</title>
        <authorList>
            <person name="Brazeau P."/>
            <person name="Boehlen P."/>
            <person name="Esch F."/>
            <person name="Ling N."/>
            <person name="Wehrenberg W.B."/>
            <person name="Guillemin R."/>
        </authorList>
    </citation>
    <scope>PROTEIN SEQUENCE</scope>
    <scope>AMIDATION AT LEU-44</scope>
    <source>
        <tissue>Hypothalamus</tissue>
    </source>
</reference>
<comment type="function">
    <text>GRF is released by the hypothalamus and acts on the adenohypophyse to stimulate the secretion of growth hormone.</text>
</comment>
<comment type="subcellular location">
    <subcellularLocation>
        <location>Secreted</location>
    </subcellularLocation>
</comment>
<comment type="similarity">
    <text evidence="2">Belongs to the glucagon family.</text>
</comment>
<sequence>YADAIFTNSYRKVLGQLSARKLLQDIMNRQQGERNQEQGAKVRL</sequence>
<gene>
    <name type="primary">GHRH</name>
</gene>